<accession>C6A4T2</accession>
<organism>
    <name type="scientific">Thermococcus sibiricus (strain DSM 12597 / MM 739)</name>
    <dbReference type="NCBI Taxonomy" id="604354"/>
    <lineage>
        <taxon>Archaea</taxon>
        <taxon>Methanobacteriati</taxon>
        <taxon>Methanobacteriota</taxon>
        <taxon>Thermococci</taxon>
        <taxon>Thermococcales</taxon>
        <taxon>Thermococcaceae</taxon>
        <taxon>Thermococcus</taxon>
    </lineage>
</organism>
<sequence length="180" mass="20771">MALRPAKIDRYVDKPAYTRREYIRGAPGPRITIFDMGNPAGDFEFEVSLHTAEPVQIRQNALEAARTQLNRYLSKNVGRSNFHYKIRVYPFQVLRENPMATGRKADRYGNGMRRPFGKPIGLAARLKKDQKILTVRVNKQHLKFALAAMKRASMKFPCKCYYRIYDKEGNDITTKVLSTL</sequence>
<gene>
    <name evidence="1" type="primary">rpl10e</name>
    <name type="ordered locus">TSIB_1576</name>
</gene>
<evidence type="ECO:0000255" key="1">
    <source>
        <dbReference type="HAMAP-Rule" id="MF_00448"/>
    </source>
</evidence>
<evidence type="ECO:0000305" key="2"/>
<reference key="1">
    <citation type="journal article" date="2009" name="Appl. Environ. Microbiol.">
        <title>Metabolic versatility and indigenous origin of the archaeon Thermococcus sibiricus, isolated from a siberian oil reservoir, as revealed by genome analysis.</title>
        <authorList>
            <person name="Mardanov A.V."/>
            <person name="Ravin N.V."/>
            <person name="Svetlitchnyi V.A."/>
            <person name="Beletsky A.V."/>
            <person name="Miroshnichenko M.L."/>
            <person name="Bonch-Osmolovskaya E.A."/>
            <person name="Skryabin K.G."/>
        </authorList>
    </citation>
    <scope>NUCLEOTIDE SEQUENCE [LARGE SCALE GENOMIC DNA]</scope>
    <source>
        <strain>DSM 12597 / MM 739</strain>
    </source>
</reference>
<feature type="chain" id="PRO_1000206205" description="Large ribosomal subunit protein uL16">
    <location>
        <begin position="1"/>
        <end position="180"/>
    </location>
</feature>
<comment type="similarity">
    <text evidence="1">Belongs to the universal ribosomal protein uL16 family.</text>
</comment>
<protein>
    <recommendedName>
        <fullName evidence="1">Large ribosomal subunit protein uL16</fullName>
    </recommendedName>
    <alternativeName>
        <fullName evidence="2">50S ribosomal protein L10e</fullName>
    </alternativeName>
</protein>
<name>RL10E_THESM</name>
<keyword id="KW-1185">Reference proteome</keyword>
<keyword id="KW-0687">Ribonucleoprotein</keyword>
<keyword id="KW-0689">Ribosomal protein</keyword>
<dbReference type="EMBL" id="CP001463">
    <property type="protein sequence ID" value="ACS90627.1"/>
    <property type="molecule type" value="Genomic_DNA"/>
</dbReference>
<dbReference type="RefSeq" id="WP_015849843.1">
    <property type="nucleotide sequence ID" value="NC_012883.1"/>
</dbReference>
<dbReference type="SMR" id="C6A4T2"/>
<dbReference type="STRING" id="604354.TSIB_1576"/>
<dbReference type="GeneID" id="8096585"/>
<dbReference type="KEGG" id="tsi:TSIB_1576"/>
<dbReference type="eggNOG" id="arCOG04113">
    <property type="taxonomic scope" value="Archaea"/>
</dbReference>
<dbReference type="HOGENOM" id="CLU_084051_0_2_2"/>
<dbReference type="OrthoDB" id="30538at2157"/>
<dbReference type="Proteomes" id="UP000009079">
    <property type="component" value="Chromosome"/>
</dbReference>
<dbReference type="GO" id="GO:1990904">
    <property type="term" value="C:ribonucleoprotein complex"/>
    <property type="evidence" value="ECO:0007669"/>
    <property type="project" value="UniProtKB-KW"/>
</dbReference>
<dbReference type="GO" id="GO:0005840">
    <property type="term" value="C:ribosome"/>
    <property type="evidence" value="ECO:0007669"/>
    <property type="project" value="UniProtKB-KW"/>
</dbReference>
<dbReference type="GO" id="GO:0003735">
    <property type="term" value="F:structural constituent of ribosome"/>
    <property type="evidence" value="ECO:0007669"/>
    <property type="project" value="InterPro"/>
</dbReference>
<dbReference type="GO" id="GO:0006412">
    <property type="term" value="P:translation"/>
    <property type="evidence" value="ECO:0007669"/>
    <property type="project" value="UniProtKB-UniRule"/>
</dbReference>
<dbReference type="CDD" id="cd01433">
    <property type="entry name" value="Ribosomal_L16_L10e"/>
    <property type="match status" value="1"/>
</dbReference>
<dbReference type="Gene3D" id="3.90.1170.10">
    <property type="entry name" value="Ribosomal protein L10e/L16"/>
    <property type="match status" value="1"/>
</dbReference>
<dbReference type="HAMAP" id="MF_00448">
    <property type="entry name" value="Ribosomal_uL16_arch"/>
    <property type="match status" value="1"/>
</dbReference>
<dbReference type="InterPro" id="IPR047873">
    <property type="entry name" value="Ribosomal_uL16"/>
</dbReference>
<dbReference type="InterPro" id="IPR022981">
    <property type="entry name" value="Ribosomal_uL16_arc"/>
</dbReference>
<dbReference type="InterPro" id="IPR018255">
    <property type="entry name" value="Ribosomal_uL16_CS_euk_arc"/>
</dbReference>
<dbReference type="InterPro" id="IPR016180">
    <property type="entry name" value="Ribosomal_uL16_dom"/>
</dbReference>
<dbReference type="InterPro" id="IPR001197">
    <property type="entry name" value="Ribosomal_uL16_euk_arch"/>
</dbReference>
<dbReference type="InterPro" id="IPR036920">
    <property type="entry name" value="Ribosomal_uL16_sf"/>
</dbReference>
<dbReference type="NCBIfam" id="NF003237">
    <property type="entry name" value="PRK04199.1-2"/>
    <property type="match status" value="1"/>
</dbReference>
<dbReference type="NCBIfam" id="NF003239">
    <property type="entry name" value="PRK04199.1-4"/>
    <property type="match status" value="1"/>
</dbReference>
<dbReference type="PANTHER" id="PTHR11726">
    <property type="entry name" value="60S RIBOSOMAL PROTEIN L10"/>
    <property type="match status" value="1"/>
</dbReference>
<dbReference type="Pfam" id="PF00252">
    <property type="entry name" value="Ribosomal_L16"/>
    <property type="match status" value="1"/>
</dbReference>
<dbReference type="PIRSF" id="PIRSF005590">
    <property type="entry name" value="Ribosomal_L10"/>
    <property type="match status" value="1"/>
</dbReference>
<dbReference type="SUPFAM" id="SSF54686">
    <property type="entry name" value="Ribosomal protein L16p/L10e"/>
    <property type="match status" value="1"/>
</dbReference>
<dbReference type="PROSITE" id="PS01257">
    <property type="entry name" value="RIBOSOMAL_L10E"/>
    <property type="match status" value="1"/>
</dbReference>
<proteinExistence type="inferred from homology"/>